<dbReference type="EMBL" id="U78193">
    <property type="protein sequence ID" value="AAB36826.1"/>
    <property type="molecule type" value="Genomic_DNA"/>
</dbReference>
<dbReference type="EMBL" id="AE000783">
    <property type="protein sequence ID" value="AAC66860.1"/>
    <property type="molecule type" value="Genomic_DNA"/>
</dbReference>
<dbReference type="PIR" id="A70160">
    <property type="entry name" value="A70160"/>
</dbReference>
<dbReference type="RefSeq" id="NP_212616.1">
    <property type="nucleotide sequence ID" value="NC_001318.1"/>
</dbReference>
<dbReference type="RefSeq" id="WP_002557073.1">
    <property type="nucleotide sequence ID" value="NC_001318.1"/>
</dbReference>
<dbReference type="PDB" id="8FMW">
    <property type="method" value="EM"/>
    <property type="resolution" value="2.86 A"/>
    <property type="chains" value="S=2-85"/>
</dbReference>
<dbReference type="PDBsum" id="8FMW"/>
<dbReference type="EMDB" id="EMD-29298"/>
<dbReference type="SMR" id="P94271"/>
<dbReference type="STRING" id="224326.BB_0482"/>
<dbReference type="PaxDb" id="224326-BB_0482"/>
<dbReference type="EnsemblBacteria" id="AAC66860">
    <property type="protein sequence ID" value="AAC66860"/>
    <property type="gene ID" value="BB_0482"/>
</dbReference>
<dbReference type="GeneID" id="83865957"/>
<dbReference type="KEGG" id="bbu:BB_0482"/>
<dbReference type="PATRIC" id="fig|224326.49.peg.873"/>
<dbReference type="HOGENOM" id="CLU_144911_0_1_12"/>
<dbReference type="OrthoDB" id="9797833at2"/>
<dbReference type="PRO" id="PR:P94271"/>
<dbReference type="Proteomes" id="UP000001807">
    <property type="component" value="Chromosome"/>
</dbReference>
<dbReference type="GO" id="GO:0005737">
    <property type="term" value="C:cytoplasm"/>
    <property type="evidence" value="ECO:0007669"/>
    <property type="project" value="UniProtKB-ARBA"/>
</dbReference>
<dbReference type="GO" id="GO:0015935">
    <property type="term" value="C:small ribosomal subunit"/>
    <property type="evidence" value="ECO:0007669"/>
    <property type="project" value="InterPro"/>
</dbReference>
<dbReference type="GO" id="GO:0019843">
    <property type="term" value="F:rRNA binding"/>
    <property type="evidence" value="ECO:0007669"/>
    <property type="project" value="UniProtKB-UniRule"/>
</dbReference>
<dbReference type="GO" id="GO:0003735">
    <property type="term" value="F:structural constituent of ribosome"/>
    <property type="evidence" value="ECO:0007669"/>
    <property type="project" value="InterPro"/>
</dbReference>
<dbReference type="GO" id="GO:0000028">
    <property type="term" value="P:ribosomal small subunit assembly"/>
    <property type="evidence" value="ECO:0007669"/>
    <property type="project" value="TreeGrafter"/>
</dbReference>
<dbReference type="GO" id="GO:0006412">
    <property type="term" value="P:translation"/>
    <property type="evidence" value="ECO:0007669"/>
    <property type="project" value="UniProtKB-UniRule"/>
</dbReference>
<dbReference type="FunFam" id="3.30.860.10:FF:000001">
    <property type="entry name" value="30S ribosomal protein S19"/>
    <property type="match status" value="1"/>
</dbReference>
<dbReference type="Gene3D" id="3.30.860.10">
    <property type="entry name" value="30s Ribosomal Protein S19, Chain A"/>
    <property type="match status" value="1"/>
</dbReference>
<dbReference type="HAMAP" id="MF_00531">
    <property type="entry name" value="Ribosomal_uS19"/>
    <property type="match status" value="1"/>
</dbReference>
<dbReference type="InterPro" id="IPR002222">
    <property type="entry name" value="Ribosomal_uS19"/>
</dbReference>
<dbReference type="InterPro" id="IPR005732">
    <property type="entry name" value="Ribosomal_uS19_bac-type"/>
</dbReference>
<dbReference type="InterPro" id="IPR020934">
    <property type="entry name" value="Ribosomal_uS19_CS"/>
</dbReference>
<dbReference type="InterPro" id="IPR023575">
    <property type="entry name" value="Ribosomal_uS19_SF"/>
</dbReference>
<dbReference type="NCBIfam" id="TIGR01050">
    <property type="entry name" value="rpsS_bact"/>
    <property type="match status" value="1"/>
</dbReference>
<dbReference type="PANTHER" id="PTHR11880">
    <property type="entry name" value="RIBOSOMAL PROTEIN S19P FAMILY MEMBER"/>
    <property type="match status" value="1"/>
</dbReference>
<dbReference type="PANTHER" id="PTHR11880:SF8">
    <property type="entry name" value="SMALL RIBOSOMAL SUBUNIT PROTEIN US19M"/>
    <property type="match status" value="1"/>
</dbReference>
<dbReference type="Pfam" id="PF00203">
    <property type="entry name" value="Ribosomal_S19"/>
    <property type="match status" value="1"/>
</dbReference>
<dbReference type="PIRSF" id="PIRSF002144">
    <property type="entry name" value="Ribosomal_S19"/>
    <property type="match status" value="1"/>
</dbReference>
<dbReference type="PRINTS" id="PR00975">
    <property type="entry name" value="RIBOSOMALS19"/>
</dbReference>
<dbReference type="SUPFAM" id="SSF54570">
    <property type="entry name" value="Ribosomal protein S19"/>
    <property type="match status" value="1"/>
</dbReference>
<dbReference type="PROSITE" id="PS00323">
    <property type="entry name" value="RIBOSOMAL_S19"/>
    <property type="match status" value="1"/>
</dbReference>
<feature type="chain" id="PRO_0000129787" description="Small ribosomal subunit protein uS19">
    <location>
        <begin position="1"/>
        <end position="92"/>
    </location>
</feature>
<feature type="sequence conflict" description="In Ref. 1; AAB36826." evidence="2" ref="1">
    <original>G</original>
    <variation>A</variation>
    <location>
        <position position="54"/>
    </location>
</feature>
<reference key="1">
    <citation type="submission" date="1996-12" db="EMBL/GenBank/DDBJ databases">
        <authorList>
            <person name="Perlee L."/>
            <person name="Qi H."/>
            <person name="Schwartz I."/>
        </authorList>
    </citation>
    <scope>NUCLEOTIDE SEQUENCE [GENOMIC DNA]</scope>
    <source>
        <strain>ATCC 35210 / DSM 4680 / CIP 102532 / B31</strain>
    </source>
</reference>
<reference key="2">
    <citation type="journal article" date="1997" name="Nature">
        <title>Genomic sequence of a Lyme disease spirochaete, Borrelia burgdorferi.</title>
        <authorList>
            <person name="Fraser C.M."/>
            <person name="Casjens S."/>
            <person name="Huang W.M."/>
            <person name="Sutton G.G."/>
            <person name="Clayton R.A."/>
            <person name="Lathigra R."/>
            <person name="White O."/>
            <person name="Ketchum K.A."/>
            <person name="Dodson R.J."/>
            <person name="Hickey E.K."/>
            <person name="Gwinn M.L."/>
            <person name="Dougherty B.A."/>
            <person name="Tomb J.-F."/>
            <person name="Fleischmann R.D."/>
            <person name="Richardson D.L."/>
            <person name="Peterson J.D."/>
            <person name="Kerlavage A.R."/>
            <person name="Quackenbush J."/>
            <person name="Salzberg S.L."/>
            <person name="Hanson M."/>
            <person name="van Vugt R."/>
            <person name="Palmer N."/>
            <person name="Adams M.D."/>
            <person name="Gocayne J.D."/>
            <person name="Weidman J.F."/>
            <person name="Utterback T.R."/>
            <person name="Watthey L."/>
            <person name="McDonald L.A."/>
            <person name="Artiach P."/>
            <person name="Bowman C."/>
            <person name="Garland S.A."/>
            <person name="Fujii C."/>
            <person name="Cotton M.D."/>
            <person name="Horst K."/>
            <person name="Roberts K.M."/>
            <person name="Hatch B."/>
            <person name="Smith H.O."/>
            <person name="Venter J.C."/>
        </authorList>
    </citation>
    <scope>NUCLEOTIDE SEQUENCE [LARGE SCALE GENOMIC DNA]</scope>
    <source>
        <strain>ATCC 35210 / DSM 4680 / CIP 102532 / B31</strain>
    </source>
</reference>
<comment type="function">
    <text evidence="1">Protein S19 forms a complex with S13 that binds strongly to the 16S ribosomal RNA.</text>
</comment>
<comment type="similarity">
    <text evidence="2">Belongs to the universal ribosomal protein uS19 family.</text>
</comment>
<accession>P94271</accession>
<accession>O51435</accession>
<gene>
    <name type="primary">rpsS</name>
    <name type="ordered locus">BB_0482</name>
</gene>
<name>RS19_BORBU</name>
<keyword id="KW-0002">3D-structure</keyword>
<keyword id="KW-1185">Reference proteome</keyword>
<keyword id="KW-0687">Ribonucleoprotein</keyword>
<keyword id="KW-0689">Ribosomal protein</keyword>
<keyword id="KW-0694">RNA-binding</keyword>
<keyword id="KW-0699">rRNA-binding</keyword>
<evidence type="ECO:0000250" key="1"/>
<evidence type="ECO:0000305" key="2"/>
<protein>
    <recommendedName>
        <fullName evidence="2">Small ribosomal subunit protein uS19</fullName>
    </recommendedName>
    <alternativeName>
        <fullName>30S ribosomal protein S19</fullName>
    </alternativeName>
</protein>
<proteinExistence type="evidence at protein level"/>
<sequence length="92" mass="10410">MARSIKKGPFIEKSLYQKVLSSFGSEKRVVIKTYSRSSTIIPEMVSLTISVYNGKTFIPIYITEDLVGHKLGEFSPTRIFRGHAKSDKKGRK</sequence>
<organism>
    <name type="scientific">Borreliella burgdorferi (strain ATCC 35210 / DSM 4680 / CIP 102532 / B31)</name>
    <name type="common">Borrelia burgdorferi</name>
    <dbReference type="NCBI Taxonomy" id="224326"/>
    <lineage>
        <taxon>Bacteria</taxon>
        <taxon>Pseudomonadati</taxon>
        <taxon>Spirochaetota</taxon>
        <taxon>Spirochaetia</taxon>
        <taxon>Spirochaetales</taxon>
        <taxon>Borreliaceae</taxon>
        <taxon>Borreliella</taxon>
    </lineage>
</organism>